<comment type="function">
    <text evidence="1">Reduces trimethylamine-N-oxide (TMAO) into trimethylamine; an anaerobic reaction coupled to energy-yielding reactions. Can also reduce other N- and S-oxide compounds such as 4-methylmorpholine-N-oxide and biotin sulfoxide (BSO), but with a lower catalytic efficiency (By similarity).</text>
</comment>
<comment type="catalytic activity">
    <reaction>
        <text>trimethylamine + 2 Fe(III)-[cytochrome c] + H2O = trimethylamine N-oxide + 2 Fe(II)-[cytochrome c] + 3 H(+)</text>
        <dbReference type="Rhea" id="RHEA:24236"/>
        <dbReference type="Rhea" id="RHEA-COMP:10350"/>
        <dbReference type="Rhea" id="RHEA-COMP:14399"/>
        <dbReference type="ChEBI" id="CHEBI:15377"/>
        <dbReference type="ChEBI" id="CHEBI:15378"/>
        <dbReference type="ChEBI" id="CHEBI:15724"/>
        <dbReference type="ChEBI" id="CHEBI:29033"/>
        <dbReference type="ChEBI" id="CHEBI:29034"/>
        <dbReference type="ChEBI" id="CHEBI:58389"/>
        <dbReference type="EC" id="1.7.2.3"/>
    </reaction>
</comment>
<comment type="cofactor">
    <cofactor evidence="1">
        <name>Mo-bis(molybdopterin guanine dinucleotide)</name>
        <dbReference type="ChEBI" id="CHEBI:60539"/>
    </cofactor>
    <text evidence="1">Binds 1 molybdenum-bis(molybdopterin guanine dinucleotide) (Mo-bis-MGD) cofactor per subunit.</text>
</comment>
<comment type="subcellular location">
    <subcellularLocation>
        <location evidence="1">Periplasm</location>
    </subcellularLocation>
</comment>
<comment type="PTM">
    <text>Predicted to be exported by the Tat system. The position of the signal peptide cleavage has not been experimentally proven.</text>
</comment>
<comment type="miscellaneous">
    <text evidence="1">Expression of torYZ allows E.coli to grow anaerobically on a wider range of substrates than does expression of torCAD.</text>
</comment>
<comment type="similarity">
    <text evidence="3">Belongs to the prokaryotic molybdopterin-containing oxidoreductase family.</text>
</comment>
<comment type="sequence caution" evidence="3">
    <conflict type="erroneous initiation">
        <sequence resource="EMBL-CDS" id="AAG56862"/>
    </conflict>
    <text>Extended N-terminus.</text>
</comment>
<dbReference type="EC" id="1.7.2.3"/>
<dbReference type="EMBL" id="AE005174">
    <property type="protein sequence ID" value="AAG56862.1"/>
    <property type="status" value="ALT_INIT"/>
    <property type="molecule type" value="Genomic_DNA"/>
</dbReference>
<dbReference type="EMBL" id="BA000007">
    <property type="protein sequence ID" value="BAB36005.2"/>
    <property type="molecule type" value="Genomic_DNA"/>
</dbReference>
<dbReference type="PIR" id="B85800">
    <property type="entry name" value="B85800"/>
</dbReference>
<dbReference type="PIR" id="F90951">
    <property type="entry name" value="F90951"/>
</dbReference>
<dbReference type="RefSeq" id="WP_000176813.1">
    <property type="nucleotide sequence ID" value="NZ_SEKU01000012.1"/>
</dbReference>
<dbReference type="SMR" id="P58362"/>
<dbReference type="STRING" id="155864.Z2925"/>
<dbReference type="TCDB" id="5.A.3.4.2">
    <property type="family name" value="the prokaryotic molybdopterin-containing oxidoreductase (pmo) family"/>
</dbReference>
<dbReference type="KEGG" id="ece:Z2925"/>
<dbReference type="KEGG" id="ecs:ECs_2582"/>
<dbReference type="PATRIC" id="fig|386585.9.peg.2707"/>
<dbReference type="eggNOG" id="COG0243">
    <property type="taxonomic scope" value="Bacteria"/>
</dbReference>
<dbReference type="HOGENOM" id="CLU_000422_13_3_6"/>
<dbReference type="OMA" id="NDSYYPK"/>
<dbReference type="Proteomes" id="UP000000558">
    <property type="component" value="Chromosome"/>
</dbReference>
<dbReference type="Proteomes" id="UP000002519">
    <property type="component" value="Chromosome"/>
</dbReference>
<dbReference type="GO" id="GO:0030288">
    <property type="term" value="C:outer membrane-bounded periplasmic space"/>
    <property type="evidence" value="ECO:0007669"/>
    <property type="project" value="TreeGrafter"/>
</dbReference>
<dbReference type="GO" id="GO:0009055">
    <property type="term" value="F:electron transfer activity"/>
    <property type="evidence" value="ECO:0007669"/>
    <property type="project" value="TreeGrafter"/>
</dbReference>
<dbReference type="GO" id="GO:0030151">
    <property type="term" value="F:molybdenum ion binding"/>
    <property type="evidence" value="ECO:0007669"/>
    <property type="project" value="TreeGrafter"/>
</dbReference>
<dbReference type="GO" id="GO:0043546">
    <property type="term" value="F:molybdopterin cofactor binding"/>
    <property type="evidence" value="ECO:0007669"/>
    <property type="project" value="InterPro"/>
</dbReference>
<dbReference type="GO" id="GO:0050626">
    <property type="term" value="F:trimethylamine-N-oxide reductase (cytochrome c) activity"/>
    <property type="evidence" value="ECO:0007669"/>
    <property type="project" value="UniProtKB-EC"/>
</dbReference>
<dbReference type="GO" id="GO:0009061">
    <property type="term" value="P:anaerobic respiration"/>
    <property type="evidence" value="ECO:0007669"/>
    <property type="project" value="TreeGrafter"/>
</dbReference>
<dbReference type="CDD" id="cd02793">
    <property type="entry name" value="MopB_CT_DMSOR-BSOR-TMAOR"/>
    <property type="match status" value="1"/>
</dbReference>
<dbReference type="CDD" id="cd02769">
    <property type="entry name" value="MopB_DMSOR-BSOR-TMAOR"/>
    <property type="match status" value="1"/>
</dbReference>
<dbReference type="FunFam" id="2.40.40.20:FF:000009">
    <property type="entry name" value="Biotin sulfoxide reductase 2"/>
    <property type="match status" value="1"/>
</dbReference>
<dbReference type="FunFam" id="3.40.228.10:FF:000003">
    <property type="entry name" value="Biotin sulfoxide reductase 2"/>
    <property type="match status" value="1"/>
</dbReference>
<dbReference type="Gene3D" id="2.40.40.20">
    <property type="match status" value="1"/>
</dbReference>
<dbReference type="Gene3D" id="3.40.50.740">
    <property type="match status" value="1"/>
</dbReference>
<dbReference type="Gene3D" id="3.40.228.10">
    <property type="entry name" value="Dimethylsulfoxide Reductase, domain 2"/>
    <property type="match status" value="1"/>
</dbReference>
<dbReference type="Gene3D" id="3.90.55.10">
    <property type="entry name" value="Dimethylsulfoxide Reductase, domain 3"/>
    <property type="match status" value="1"/>
</dbReference>
<dbReference type="InterPro" id="IPR009010">
    <property type="entry name" value="Asp_de-COase-like_dom_sf"/>
</dbReference>
<dbReference type="InterPro" id="IPR006658">
    <property type="entry name" value="BisC"/>
</dbReference>
<dbReference type="InterPro" id="IPR041954">
    <property type="entry name" value="CT_DMSOR/BSOR/TMAOR"/>
</dbReference>
<dbReference type="InterPro" id="IPR041460">
    <property type="entry name" value="Molybdopterin_N"/>
</dbReference>
<dbReference type="InterPro" id="IPR006657">
    <property type="entry name" value="MoPterin_dinucl-bd_dom"/>
</dbReference>
<dbReference type="InterPro" id="IPR006656">
    <property type="entry name" value="Mopterin_OxRdtase"/>
</dbReference>
<dbReference type="InterPro" id="IPR006655">
    <property type="entry name" value="Mopterin_OxRdtase_prok_CS"/>
</dbReference>
<dbReference type="InterPro" id="IPR050612">
    <property type="entry name" value="Prok_Mopterin_Oxidored"/>
</dbReference>
<dbReference type="InterPro" id="IPR006311">
    <property type="entry name" value="TAT_signal"/>
</dbReference>
<dbReference type="InterPro" id="IPR019546">
    <property type="entry name" value="TAT_signal_bac_arc"/>
</dbReference>
<dbReference type="NCBIfam" id="TIGR00509">
    <property type="entry name" value="bisC_fam"/>
    <property type="match status" value="1"/>
</dbReference>
<dbReference type="NCBIfam" id="TIGR01409">
    <property type="entry name" value="TAT_signal_seq"/>
    <property type="match status" value="1"/>
</dbReference>
<dbReference type="PANTHER" id="PTHR43742">
    <property type="entry name" value="TRIMETHYLAMINE-N-OXIDE REDUCTASE"/>
    <property type="match status" value="1"/>
</dbReference>
<dbReference type="PANTHER" id="PTHR43742:SF10">
    <property type="entry name" value="TRIMETHYLAMINE-N-OXIDE REDUCTASE 2"/>
    <property type="match status" value="1"/>
</dbReference>
<dbReference type="Pfam" id="PF00384">
    <property type="entry name" value="Molybdopterin"/>
    <property type="match status" value="1"/>
</dbReference>
<dbReference type="Pfam" id="PF18364">
    <property type="entry name" value="Molybdopterin_N"/>
    <property type="match status" value="1"/>
</dbReference>
<dbReference type="Pfam" id="PF01568">
    <property type="entry name" value="Molydop_binding"/>
    <property type="match status" value="1"/>
</dbReference>
<dbReference type="SUPFAM" id="SSF50692">
    <property type="entry name" value="ADC-like"/>
    <property type="match status" value="1"/>
</dbReference>
<dbReference type="SUPFAM" id="SSF53706">
    <property type="entry name" value="Formate dehydrogenase/DMSO reductase, domains 1-3"/>
    <property type="match status" value="1"/>
</dbReference>
<dbReference type="PROSITE" id="PS00490">
    <property type="entry name" value="MOLYBDOPTERIN_PROK_2"/>
    <property type="match status" value="1"/>
</dbReference>
<dbReference type="PROSITE" id="PS00932">
    <property type="entry name" value="MOLYBDOPTERIN_PROK_3"/>
    <property type="match status" value="1"/>
</dbReference>
<dbReference type="PROSITE" id="PS51318">
    <property type="entry name" value="TAT"/>
    <property type="match status" value="1"/>
</dbReference>
<organism>
    <name type="scientific">Escherichia coli O157:H7</name>
    <dbReference type="NCBI Taxonomy" id="83334"/>
    <lineage>
        <taxon>Bacteria</taxon>
        <taxon>Pseudomonadati</taxon>
        <taxon>Pseudomonadota</taxon>
        <taxon>Gammaproteobacteria</taxon>
        <taxon>Enterobacterales</taxon>
        <taxon>Enterobacteriaceae</taxon>
        <taxon>Escherichia</taxon>
    </lineage>
</organism>
<protein>
    <recommendedName>
        <fullName>Trimethylamine-N-oxide reductase 2</fullName>
        <shortName>TMAO reductase 2</shortName>
        <shortName>Trimethylamine oxidase 2</shortName>
        <ecNumber>1.7.2.3</ecNumber>
    </recommendedName>
</protein>
<evidence type="ECO:0000250" key="1"/>
<evidence type="ECO:0000255" key="2">
    <source>
        <dbReference type="PROSITE-ProRule" id="PRU00648"/>
    </source>
</evidence>
<evidence type="ECO:0000305" key="3"/>
<proteinExistence type="inferred from homology"/>
<name>TORZ_ECO57</name>
<accession>P58362</accession>
<reference key="1">
    <citation type="journal article" date="2001" name="Nature">
        <title>Genome sequence of enterohaemorrhagic Escherichia coli O157:H7.</title>
        <authorList>
            <person name="Perna N.T."/>
            <person name="Plunkett G. III"/>
            <person name="Burland V."/>
            <person name="Mau B."/>
            <person name="Glasner J.D."/>
            <person name="Rose D.J."/>
            <person name="Mayhew G.F."/>
            <person name="Evans P.S."/>
            <person name="Gregor J."/>
            <person name="Kirkpatrick H.A."/>
            <person name="Posfai G."/>
            <person name="Hackett J."/>
            <person name="Klink S."/>
            <person name="Boutin A."/>
            <person name="Shao Y."/>
            <person name="Miller L."/>
            <person name="Grotbeck E.J."/>
            <person name="Davis N.W."/>
            <person name="Lim A."/>
            <person name="Dimalanta E.T."/>
            <person name="Potamousis K."/>
            <person name="Apodaca J."/>
            <person name="Anantharaman T.S."/>
            <person name="Lin J."/>
            <person name="Yen G."/>
            <person name="Schwartz D.C."/>
            <person name="Welch R.A."/>
            <person name="Blattner F.R."/>
        </authorList>
    </citation>
    <scope>NUCLEOTIDE SEQUENCE [LARGE SCALE GENOMIC DNA]</scope>
    <source>
        <strain>O157:H7 / EDL933 / ATCC 700927 / EHEC</strain>
    </source>
</reference>
<reference key="2">
    <citation type="journal article" date="2001" name="DNA Res.">
        <title>Complete genome sequence of enterohemorrhagic Escherichia coli O157:H7 and genomic comparison with a laboratory strain K-12.</title>
        <authorList>
            <person name="Hayashi T."/>
            <person name="Makino K."/>
            <person name="Ohnishi M."/>
            <person name="Kurokawa K."/>
            <person name="Ishii K."/>
            <person name="Yokoyama K."/>
            <person name="Han C.-G."/>
            <person name="Ohtsubo E."/>
            <person name="Nakayama K."/>
            <person name="Murata T."/>
            <person name="Tanaka M."/>
            <person name="Tobe T."/>
            <person name="Iida T."/>
            <person name="Takami H."/>
            <person name="Honda T."/>
            <person name="Sasakawa C."/>
            <person name="Ogasawara N."/>
            <person name="Yasunaga T."/>
            <person name="Kuhara S."/>
            <person name="Shiba T."/>
            <person name="Hattori M."/>
            <person name="Shinagawa H."/>
        </authorList>
    </citation>
    <scope>NUCLEOTIDE SEQUENCE [LARGE SCALE GENOMIC DNA]</scope>
    <source>
        <strain>O157:H7 / Sakai / RIMD 0509952 / EHEC</strain>
    </source>
</reference>
<feature type="signal peptide" description="Tat-type signal" evidence="2">
    <location>
        <begin position="1"/>
        <end position="31"/>
    </location>
</feature>
<feature type="chain" id="PRO_0000019165" description="Trimethylamine-N-oxide reductase 2">
    <location>
        <begin position="32"/>
        <end position="809"/>
    </location>
</feature>
<feature type="binding site" evidence="1">
    <location>
        <position position="176"/>
    </location>
    <ligand>
        <name>Mo-bis(molybdopterin guanine dinucleotide)</name>
        <dbReference type="ChEBI" id="CHEBI:60539"/>
    </ligand>
    <ligandPart>
        <name>Mo</name>
        <dbReference type="ChEBI" id="CHEBI:28685"/>
    </ligandPart>
</feature>
<gene>
    <name type="primary">torZ</name>
    <name type="synonym">bisZ</name>
    <name type="ordered locus">Z2925</name>
    <name type="ordered locus">ECs2582</name>
</gene>
<keyword id="KW-0479">Metal-binding</keyword>
<keyword id="KW-0500">Molybdenum</keyword>
<keyword id="KW-0560">Oxidoreductase</keyword>
<keyword id="KW-0574">Periplasm</keyword>
<keyword id="KW-1185">Reference proteome</keyword>
<keyword id="KW-0732">Signal</keyword>
<sequence length="809" mass="88979">MTLTRREFIKHSGIAAGALVVTSAAPLPAWAEEKGGKILTAGRWGAMNVEVKDGKIVSSTGALAKTIPNSLQSTAADQVHTTARIQHPMVRKSYLDNPLQPAKGRGEDTYVQVSWEQALKLIHEQHERIRKANGPSAIFAGSYGWRSSGVLHKAQTLLQRYMNLAGGYSGHSGDYSTGAAQVIMPHVVGSVEVYEQQTSWPLILENSQVVVLWGMNPLNTLKIAWSSTDEQGLEYFHQLKKSGKPVIAIDPIRSETIEFFGYNATWIAPNMGTDVALMLGIAHTLMTQGKHDKVFLEKYTTGYPQFEEYLTGKSDNTPKSAAWTAEITGVPEAQIVKLAELMAANRTMLMAGWGIQRQQYGEQKHWMLVTLAAMLGQIGTPGGGFGFSYHYSNGGNPTRVGGVLPEMSAAIAGQASEAADDGGMTAIPVARIVDALENPGGKYQHNGKEQTYPNIKMIWWAGGGNFTHHQDTNRLIKAWQKPEMIVVSECYWTAAAKHADIVLPITTSFERNDLTMTGDYSNQHIVPMKQAVAPQFEARNDFDVFAELAELLKPGGKEIYTEGKDEMAWLKFFYDAAQKGARAQRVTMPMFNAFWQQNKLIEMRRSEKNEQYVRYGDFRADPVKNALGTPSGKIEIYSKTLEKFGYKDCPAHPTWLAPDEWKGTADEKQLQLLTAHPAHRLHSQLNYAQLRKKYAVADREPITIHTEDAARFGIANGDLVRVWNKRGQILTGAVVTDGIKKGVVCVHEGAWPDLENGLCKNGSANVLTADIPSSQLANACAGNSALVYIEKYTGNAPKLTAFDQPAVQA</sequence>